<name>GHRA_CITK8</name>
<organism>
    <name type="scientific">Citrobacter koseri (strain ATCC BAA-895 / CDC 4225-83 / SGSC4696)</name>
    <dbReference type="NCBI Taxonomy" id="290338"/>
    <lineage>
        <taxon>Bacteria</taxon>
        <taxon>Pseudomonadati</taxon>
        <taxon>Pseudomonadota</taxon>
        <taxon>Gammaproteobacteria</taxon>
        <taxon>Enterobacterales</taxon>
        <taxon>Enterobacteriaceae</taxon>
        <taxon>Citrobacter</taxon>
    </lineage>
</organism>
<dbReference type="EC" id="1.1.1.79" evidence="1"/>
<dbReference type="EC" id="1.1.1.81" evidence="1"/>
<dbReference type="EMBL" id="CP000822">
    <property type="protein sequence ID" value="ABV13162.1"/>
    <property type="molecule type" value="Genomic_DNA"/>
</dbReference>
<dbReference type="RefSeq" id="WP_012132898.1">
    <property type="nucleotide sequence ID" value="NC_009792.1"/>
</dbReference>
<dbReference type="SMR" id="A8AI49"/>
<dbReference type="STRING" id="290338.CKO_02036"/>
<dbReference type="GeneID" id="45135998"/>
<dbReference type="KEGG" id="cko:CKO_02036"/>
<dbReference type="HOGENOM" id="CLU_019796_1_0_6"/>
<dbReference type="OrthoDB" id="9787219at2"/>
<dbReference type="Proteomes" id="UP000008148">
    <property type="component" value="Chromosome"/>
</dbReference>
<dbReference type="GO" id="GO:0005737">
    <property type="term" value="C:cytoplasm"/>
    <property type="evidence" value="ECO:0007669"/>
    <property type="project" value="UniProtKB-SubCell"/>
</dbReference>
<dbReference type="GO" id="GO:0030267">
    <property type="term" value="F:glyoxylate reductase (NADPH) activity"/>
    <property type="evidence" value="ECO:0007669"/>
    <property type="project" value="UniProtKB-UniRule"/>
</dbReference>
<dbReference type="GO" id="GO:0008465">
    <property type="term" value="F:hydroxypyruvate reductase (NADH) activity"/>
    <property type="evidence" value="ECO:0007669"/>
    <property type="project" value="RHEA"/>
</dbReference>
<dbReference type="GO" id="GO:0120509">
    <property type="term" value="F:hydroxypyruvate reductase (NADPH) activity"/>
    <property type="evidence" value="ECO:0007669"/>
    <property type="project" value="RHEA"/>
</dbReference>
<dbReference type="GO" id="GO:0051287">
    <property type="term" value="F:NAD binding"/>
    <property type="evidence" value="ECO:0007669"/>
    <property type="project" value="InterPro"/>
</dbReference>
<dbReference type="CDD" id="cd12164">
    <property type="entry name" value="GDH_like_2"/>
    <property type="match status" value="1"/>
</dbReference>
<dbReference type="FunFam" id="3.40.50.720:FF:000110">
    <property type="entry name" value="Glyoxylate/hydroxypyruvate reductase A"/>
    <property type="match status" value="1"/>
</dbReference>
<dbReference type="Gene3D" id="3.40.50.720">
    <property type="entry name" value="NAD(P)-binding Rossmann-like Domain"/>
    <property type="match status" value="2"/>
</dbReference>
<dbReference type="HAMAP" id="MF_01666">
    <property type="entry name" value="2_Hacid_dh_C_GhrA"/>
    <property type="match status" value="1"/>
</dbReference>
<dbReference type="InterPro" id="IPR029753">
    <property type="entry name" value="D-isomer_DH_CS"/>
</dbReference>
<dbReference type="InterPro" id="IPR006140">
    <property type="entry name" value="D-isomer_DH_NAD-bd"/>
</dbReference>
<dbReference type="InterPro" id="IPR023514">
    <property type="entry name" value="GhrA_Enterobacterales"/>
</dbReference>
<dbReference type="InterPro" id="IPR036291">
    <property type="entry name" value="NAD(P)-bd_dom_sf"/>
</dbReference>
<dbReference type="NCBIfam" id="NF012013">
    <property type="entry name" value="PRK15469.1"/>
    <property type="match status" value="1"/>
</dbReference>
<dbReference type="PANTHER" id="PTHR43333">
    <property type="entry name" value="2-HACID_DH_C DOMAIN-CONTAINING PROTEIN"/>
    <property type="match status" value="1"/>
</dbReference>
<dbReference type="PANTHER" id="PTHR43333:SF1">
    <property type="entry name" value="D-ISOMER SPECIFIC 2-HYDROXYACID DEHYDROGENASE NAD-BINDING DOMAIN-CONTAINING PROTEIN"/>
    <property type="match status" value="1"/>
</dbReference>
<dbReference type="Pfam" id="PF02826">
    <property type="entry name" value="2-Hacid_dh_C"/>
    <property type="match status" value="1"/>
</dbReference>
<dbReference type="SUPFAM" id="SSF51735">
    <property type="entry name" value="NAD(P)-binding Rossmann-fold domains"/>
    <property type="match status" value="1"/>
</dbReference>
<dbReference type="PROSITE" id="PS00671">
    <property type="entry name" value="D_2_HYDROXYACID_DH_3"/>
    <property type="match status" value="1"/>
</dbReference>
<proteinExistence type="inferred from homology"/>
<evidence type="ECO:0000255" key="1">
    <source>
        <dbReference type="HAMAP-Rule" id="MF_01666"/>
    </source>
</evidence>
<protein>
    <recommendedName>
        <fullName evidence="1">Glyoxylate/hydroxypyruvate reductase A</fullName>
        <ecNumber evidence="1">1.1.1.79</ecNumber>
        <ecNumber evidence="1">1.1.1.81</ecNumber>
    </recommendedName>
    <alternativeName>
        <fullName evidence="1">2-ketoacid reductase</fullName>
    </alternativeName>
</protein>
<sequence>MEIMFYHPTFDTAWWLNALAKAIPGANIREWKPGDNEPADYALVWHPPVEMLEGRKLKAVFALGAGVDSILSKLKAHPEMLDASIPLFRLEDTGMGLQMQEYAVSQVLHWFRRFDDYQALKNQSTWQPLPEYDRDEFTVGIMGAGVLGAKVAEALQAWGFPLRCWSRSRKSWPGVESFAGAEELGAFLNQTRVLINLLPNTAETVGIINSGLLNQLRDGAYLLNLARGVHVNEDDLLAALNSEKLKGAMLDVFSREPLPKESPLWQHPRVAMTPHIAAVTRPAEAVDYISRTITHLERGESVTGQVDRVRGY</sequence>
<keyword id="KW-0963">Cytoplasm</keyword>
<keyword id="KW-0520">NAD</keyword>
<keyword id="KW-0521">NADP</keyword>
<keyword id="KW-0560">Oxidoreductase</keyword>
<keyword id="KW-1185">Reference proteome</keyword>
<comment type="function">
    <text evidence="1">Catalyzes the NADPH-dependent reduction of glyoxylate and hydroxypyruvate into glycolate and glycerate, respectively.</text>
</comment>
<comment type="catalytic activity">
    <reaction evidence="1">
        <text>glycolate + NADP(+) = glyoxylate + NADPH + H(+)</text>
        <dbReference type="Rhea" id="RHEA:10992"/>
        <dbReference type="ChEBI" id="CHEBI:15378"/>
        <dbReference type="ChEBI" id="CHEBI:29805"/>
        <dbReference type="ChEBI" id="CHEBI:36655"/>
        <dbReference type="ChEBI" id="CHEBI:57783"/>
        <dbReference type="ChEBI" id="CHEBI:58349"/>
        <dbReference type="EC" id="1.1.1.79"/>
    </reaction>
</comment>
<comment type="catalytic activity">
    <reaction evidence="1">
        <text>(R)-glycerate + NAD(+) = 3-hydroxypyruvate + NADH + H(+)</text>
        <dbReference type="Rhea" id="RHEA:17905"/>
        <dbReference type="ChEBI" id="CHEBI:15378"/>
        <dbReference type="ChEBI" id="CHEBI:16659"/>
        <dbReference type="ChEBI" id="CHEBI:17180"/>
        <dbReference type="ChEBI" id="CHEBI:57540"/>
        <dbReference type="ChEBI" id="CHEBI:57945"/>
        <dbReference type="EC" id="1.1.1.81"/>
    </reaction>
</comment>
<comment type="catalytic activity">
    <reaction evidence="1">
        <text>(R)-glycerate + NADP(+) = 3-hydroxypyruvate + NADPH + H(+)</text>
        <dbReference type="Rhea" id="RHEA:18657"/>
        <dbReference type="ChEBI" id="CHEBI:15378"/>
        <dbReference type="ChEBI" id="CHEBI:16659"/>
        <dbReference type="ChEBI" id="CHEBI:17180"/>
        <dbReference type="ChEBI" id="CHEBI:57783"/>
        <dbReference type="ChEBI" id="CHEBI:58349"/>
        <dbReference type="EC" id="1.1.1.81"/>
    </reaction>
</comment>
<comment type="subcellular location">
    <subcellularLocation>
        <location evidence="1">Cytoplasm</location>
    </subcellularLocation>
</comment>
<comment type="similarity">
    <text evidence="1">Belongs to the D-isomer specific 2-hydroxyacid dehydrogenase family. GhrA subfamily.</text>
</comment>
<reference key="1">
    <citation type="submission" date="2007-08" db="EMBL/GenBank/DDBJ databases">
        <authorList>
            <consortium name="The Citrobacter koseri Genome Sequencing Project"/>
            <person name="McClelland M."/>
            <person name="Sanderson E.K."/>
            <person name="Porwollik S."/>
            <person name="Spieth J."/>
            <person name="Clifton W.S."/>
            <person name="Latreille P."/>
            <person name="Courtney L."/>
            <person name="Wang C."/>
            <person name="Pepin K."/>
            <person name="Bhonagiri V."/>
            <person name="Nash W."/>
            <person name="Johnson M."/>
            <person name="Thiruvilangam P."/>
            <person name="Wilson R."/>
        </authorList>
    </citation>
    <scope>NUCLEOTIDE SEQUENCE [LARGE SCALE GENOMIC DNA]</scope>
    <source>
        <strain>ATCC BAA-895 / CDC 4225-83 / SGSC4696</strain>
    </source>
</reference>
<accession>A8AI49</accession>
<gene>
    <name evidence="1" type="primary">ghrA</name>
    <name type="ordered locus">CKO_02036</name>
</gene>
<feature type="chain" id="PRO_0000348353" description="Glyoxylate/hydroxypyruvate reductase A">
    <location>
        <begin position="1"/>
        <end position="312"/>
    </location>
</feature>
<feature type="active site" evidence="1">
    <location>
        <position position="227"/>
    </location>
</feature>
<feature type="active site" description="Proton donor" evidence="1">
    <location>
        <position position="275"/>
    </location>
</feature>